<comment type="function">
    <text evidence="1">Acyl-CoA dehydrogenase that exhibits broad specificity for linear acyl-CoA substrates, with a preference for long-chain substrates.</text>
</comment>
<comment type="catalytic activity">
    <reaction evidence="1">
        <text>a long-chain 2,3-saturated fatty acyl-CoA + oxidized [electron-transfer flavoprotein] + H(+) = a long-chain (2E)-enoyl-CoA + reduced [electron-transfer flavoprotein]</text>
        <dbReference type="Rhea" id="RHEA:17721"/>
        <dbReference type="Rhea" id="RHEA-COMP:10685"/>
        <dbReference type="Rhea" id="RHEA-COMP:10686"/>
        <dbReference type="ChEBI" id="CHEBI:15378"/>
        <dbReference type="ChEBI" id="CHEBI:57692"/>
        <dbReference type="ChEBI" id="CHEBI:58307"/>
        <dbReference type="ChEBI" id="CHEBI:83721"/>
        <dbReference type="ChEBI" id="CHEBI:83727"/>
        <dbReference type="EC" id="1.3.8.8"/>
    </reaction>
</comment>
<comment type="catalytic activity">
    <reaction evidence="1">
        <text>a medium-chain 2,3-saturated fatty acyl-CoA + oxidized [electron-transfer flavoprotein] + H(+) = a medium-chain (2E)-enoyl-CoA + reduced [electron-transfer flavoprotein]</text>
        <dbReference type="Rhea" id="RHEA:14477"/>
        <dbReference type="Rhea" id="RHEA-COMP:10685"/>
        <dbReference type="Rhea" id="RHEA-COMP:10686"/>
        <dbReference type="ChEBI" id="CHEBI:15378"/>
        <dbReference type="ChEBI" id="CHEBI:57692"/>
        <dbReference type="ChEBI" id="CHEBI:58307"/>
        <dbReference type="ChEBI" id="CHEBI:83723"/>
        <dbReference type="ChEBI" id="CHEBI:83726"/>
        <dbReference type="EC" id="1.3.8.7"/>
    </reaction>
</comment>
<comment type="catalytic activity">
    <reaction evidence="1">
        <text>a short-chain 2,3-saturated fatty acyl-CoA + oxidized [electron-transfer flavoprotein] + H(+) = a short-chain (2E)-enoyl-CoA + reduced [electron-transfer flavoprotein]</text>
        <dbReference type="Rhea" id="RHEA:47196"/>
        <dbReference type="Rhea" id="RHEA-COMP:10685"/>
        <dbReference type="Rhea" id="RHEA-COMP:10686"/>
        <dbReference type="ChEBI" id="CHEBI:15378"/>
        <dbReference type="ChEBI" id="CHEBI:57692"/>
        <dbReference type="ChEBI" id="CHEBI:58307"/>
        <dbReference type="ChEBI" id="CHEBI:87487"/>
        <dbReference type="ChEBI" id="CHEBI:87488"/>
        <dbReference type="EC" id="1.3.8.1"/>
    </reaction>
</comment>
<comment type="catalytic activity">
    <reaction evidence="1">
        <text>octadecanoyl-CoA + oxidized [electron-transfer flavoprotein] + H(+) = (2E)-octadecenoyl-CoA + reduced [electron-transfer flavoprotein]</text>
        <dbReference type="Rhea" id="RHEA:47240"/>
        <dbReference type="Rhea" id="RHEA-COMP:10685"/>
        <dbReference type="Rhea" id="RHEA-COMP:10686"/>
        <dbReference type="ChEBI" id="CHEBI:15378"/>
        <dbReference type="ChEBI" id="CHEBI:57394"/>
        <dbReference type="ChEBI" id="CHEBI:57692"/>
        <dbReference type="ChEBI" id="CHEBI:58307"/>
        <dbReference type="ChEBI" id="CHEBI:71412"/>
    </reaction>
</comment>
<comment type="catalytic activity">
    <reaction evidence="1">
        <text>oxidized [electron-transfer flavoprotein] + hexadecanoyl-CoA + H(+) = (2E)-hexadecenoyl-CoA + reduced [electron-transfer flavoprotein]</text>
        <dbReference type="Rhea" id="RHEA:43448"/>
        <dbReference type="Rhea" id="RHEA-COMP:10685"/>
        <dbReference type="Rhea" id="RHEA-COMP:10686"/>
        <dbReference type="ChEBI" id="CHEBI:15378"/>
        <dbReference type="ChEBI" id="CHEBI:57379"/>
        <dbReference type="ChEBI" id="CHEBI:57692"/>
        <dbReference type="ChEBI" id="CHEBI:58307"/>
        <dbReference type="ChEBI" id="CHEBI:61526"/>
    </reaction>
</comment>
<comment type="catalytic activity">
    <reaction evidence="1">
        <text>dodecanoyl-CoA + oxidized [electron-transfer flavoprotein] + H(+) = (2E)-dodecenoyl-CoA + reduced [electron-transfer flavoprotein]</text>
        <dbReference type="Rhea" id="RHEA:47296"/>
        <dbReference type="Rhea" id="RHEA-COMP:10685"/>
        <dbReference type="Rhea" id="RHEA-COMP:10686"/>
        <dbReference type="ChEBI" id="CHEBI:15378"/>
        <dbReference type="ChEBI" id="CHEBI:57330"/>
        <dbReference type="ChEBI" id="CHEBI:57375"/>
        <dbReference type="ChEBI" id="CHEBI:57692"/>
        <dbReference type="ChEBI" id="CHEBI:58307"/>
    </reaction>
</comment>
<comment type="catalytic activity">
    <reaction evidence="1">
        <text>decanoyl-CoA + oxidized [electron-transfer flavoprotein] + H(+) = (2E)-decenoyl-CoA + reduced [electron-transfer flavoprotein]</text>
        <dbReference type="Rhea" id="RHEA:48176"/>
        <dbReference type="Rhea" id="RHEA-COMP:10685"/>
        <dbReference type="Rhea" id="RHEA-COMP:10686"/>
        <dbReference type="ChEBI" id="CHEBI:15378"/>
        <dbReference type="ChEBI" id="CHEBI:57692"/>
        <dbReference type="ChEBI" id="CHEBI:58307"/>
        <dbReference type="ChEBI" id="CHEBI:61406"/>
        <dbReference type="ChEBI" id="CHEBI:61430"/>
    </reaction>
</comment>
<comment type="catalytic activity">
    <reaction evidence="1">
        <text>hexanoyl-CoA + oxidized [electron-transfer flavoprotein] + H(+) = (2E)-hexenoyl-CoA + reduced [electron-transfer flavoprotein]</text>
        <dbReference type="Rhea" id="RHEA:43464"/>
        <dbReference type="Rhea" id="RHEA-COMP:10685"/>
        <dbReference type="Rhea" id="RHEA-COMP:10686"/>
        <dbReference type="ChEBI" id="CHEBI:15378"/>
        <dbReference type="ChEBI" id="CHEBI:57692"/>
        <dbReference type="ChEBI" id="CHEBI:58307"/>
        <dbReference type="ChEBI" id="CHEBI:62077"/>
        <dbReference type="ChEBI" id="CHEBI:62620"/>
    </reaction>
</comment>
<comment type="catalytic activity">
    <reaction evidence="1">
        <text>butanoyl-CoA + oxidized [electron-transfer flavoprotein] + H(+) = (2E)-butenoyl-CoA + reduced [electron-transfer flavoprotein]</text>
        <dbReference type="Rhea" id="RHEA:24004"/>
        <dbReference type="Rhea" id="RHEA-COMP:10685"/>
        <dbReference type="Rhea" id="RHEA-COMP:10686"/>
        <dbReference type="ChEBI" id="CHEBI:15378"/>
        <dbReference type="ChEBI" id="CHEBI:57332"/>
        <dbReference type="ChEBI" id="CHEBI:57371"/>
        <dbReference type="ChEBI" id="CHEBI:57692"/>
        <dbReference type="ChEBI" id="CHEBI:58307"/>
    </reaction>
</comment>
<comment type="cofactor">
    <cofactor evidence="4">
        <name>FAD</name>
        <dbReference type="ChEBI" id="CHEBI:57692"/>
    </cofactor>
</comment>
<comment type="biophysicochemical properties">
    <kinetics>
        <KM evidence="1">358.7 uM for butanoyl-CoA</KM>
        <KM evidence="1">353 uM for hexanoyl-CoA</KM>
        <KM evidence="1">162.5 uM for octadecanoyl-CoA</KM>
        <text evidence="1">kcat is 1.07 sec(-1) with butanoyl-CoA as substrate. kcat is 0.80 sec(-1) with hexanoyl-CoA as substrate. kcat is 0.61 sec(-1) with octadecanoyl-CoA as substrate.</text>
    </kinetics>
</comment>
<comment type="pathway">
    <text evidence="4">Lipid metabolism; fatty acid metabolism.</text>
</comment>
<comment type="subunit">
    <text evidence="1">Homodimer.</text>
</comment>
<comment type="similarity">
    <text evidence="3">Belongs to the acyl-CoA dehydrogenase family.</text>
</comment>
<accession>O53666</accession>
<accession>I6Y372</accession>
<accession>Q7DA67</accession>
<keyword id="KW-0002">3D-structure</keyword>
<keyword id="KW-0274">FAD</keyword>
<keyword id="KW-0276">Fatty acid metabolism</keyword>
<keyword id="KW-0285">Flavoprotein</keyword>
<keyword id="KW-0443">Lipid metabolism</keyword>
<keyword id="KW-0560">Oxidoreductase</keyword>
<keyword id="KW-1185">Reference proteome</keyword>
<sequence length="611" mass="66046">MSHYRSNVRDQVFNLFEVLGVDKALGHGEFSDVDVDTARDMLAEVSRLAEGPVAESFVEGDRNPPVFDPKTHSVMLPESFKKSVNAMLEAGWDKVGIDEALGGMPMPKAVVWALHEHILGANPAVWMYAGGAGFAQILYHLGTEEQKKWAVLAAERGWGSTMVLTEPDAGSDVGAARTKAVQQADGSWHIDGVKRFITSGDSGDLFENIFHLVLARPEGAGPGTKGLSLYFVPKFLFDVETGEPGERNGVFVTNVEHKMGLKVSATCELAFGQHGVPAKGWLVGEVHNGIAQMFEVIEQARMMVGTKAIATLSTGYLNALQYAKSRVQGADLTQMTDKTAPRVTITHHPDVRRSLMTQKAYAEGLRALYLYTATFQDAAVAEVVHGVDAKLAVKVNDLMLPVVKGVGSEQAYAKLTESLQTLGGSGFLQDYPIEQYIRDAKIDSLYEGTTAIQAQDFFFRKIVRDKGVALAHVSGQIQEFVDSGAGNGRLKTERALLAKALTDVQGMAAALTGYLMAAQQDVTSLYKVGLGSVRFLMSVGDLIIGWLLQRQAAVAVAALDAGATGDERSFYEGKVAVASFFAKNFLPLLTSTREVIETLDNDIMELDEAAF</sequence>
<feature type="chain" id="PRO_0000452498" description="Broad-specificity linear acyl-CoA dehydrogenase FadE5">
    <location>
        <begin position="1"/>
        <end position="611"/>
    </location>
</feature>
<feature type="active site" description="Proton acceptor" evidence="4">
    <location>
        <position position="447"/>
    </location>
</feature>
<feature type="binding site" evidence="1">
    <location>
        <begin position="162"/>
        <end position="165"/>
    </location>
    <ligand>
        <name>FAD</name>
        <dbReference type="ChEBI" id="CHEBI:57692"/>
    </ligand>
</feature>
<feature type="binding site" evidence="1">
    <location>
        <position position="171"/>
    </location>
    <ligand>
        <name>a 2,3-saturated acyl-CoA</name>
        <dbReference type="ChEBI" id="CHEBI:65111"/>
    </ligand>
</feature>
<feature type="binding site" evidence="1">
    <location>
        <position position="171"/>
    </location>
    <ligand>
        <name>FAD</name>
        <dbReference type="ChEBI" id="CHEBI:57692"/>
    </ligand>
</feature>
<feature type="binding site" evidence="1">
    <location>
        <position position="198"/>
    </location>
    <ligand>
        <name>FAD</name>
        <dbReference type="ChEBI" id="CHEBI:57692"/>
    </ligand>
</feature>
<feature type="binding site" evidence="1">
    <location>
        <begin position="224"/>
        <end position="225"/>
    </location>
    <ligand>
        <name>a 2,3-saturated acyl-CoA</name>
        <dbReference type="ChEBI" id="CHEBI:65111"/>
    </ligand>
</feature>
<feature type="binding site" evidence="1">
    <location>
        <position position="301"/>
    </location>
    <ligand>
        <name>a 2,3-saturated acyl-CoA</name>
        <dbReference type="ChEBI" id="CHEBI:65111"/>
    </ligand>
</feature>
<feature type="binding site" evidence="1">
    <location>
        <position position="326"/>
    </location>
    <ligand>
        <name>FAD</name>
        <dbReference type="ChEBI" id="CHEBI:57692"/>
    </ligand>
</feature>
<feature type="binding site" evidence="1">
    <location>
        <position position="338"/>
    </location>
    <ligand>
        <name>a 2,3-saturated acyl-CoA</name>
        <dbReference type="ChEBI" id="CHEBI:65111"/>
    </ligand>
</feature>
<feature type="binding site" evidence="1">
    <location>
        <begin position="420"/>
        <end position="424"/>
    </location>
    <ligand>
        <name>FAD</name>
        <dbReference type="ChEBI" id="CHEBI:57692"/>
    </ligand>
</feature>
<feature type="binding site" evidence="1">
    <location>
        <position position="447"/>
    </location>
    <ligand>
        <name>a 2,3-saturated acyl-CoA</name>
        <dbReference type="ChEBI" id="CHEBI:65111"/>
    </ligand>
</feature>
<feature type="binding site" evidence="1">
    <location>
        <position position="449"/>
    </location>
    <ligand>
        <name>FAD</name>
        <dbReference type="ChEBI" id="CHEBI:57692"/>
    </ligand>
</feature>
<feature type="binding site" evidence="1">
    <location>
        <position position="456"/>
    </location>
    <ligand>
        <name>a 2,3-saturated acyl-CoA</name>
        <dbReference type="ChEBI" id="CHEBI:65111"/>
    </ligand>
</feature>
<feature type="binding site" evidence="1">
    <location>
        <begin position="460"/>
        <end position="461"/>
    </location>
    <ligand>
        <name>a 2,3-saturated acyl-CoA</name>
        <dbReference type="ChEBI" id="CHEBI:65111"/>
    </ligand>
</feature>
<feature type="mutagenesis site" description="Decreases affinity for eicosanoyl-CoA; when associated with A-447." evidence="1">
    <original>S</original>
    <variation>A</variation>
    <location>
        <position position="171"/>
    </location>
</feature>
<feature type="mutagenesis site" description="Decreases affinity for eicosanoyl-CoA; when associated with A-447." evidence="1">
    <original>K</original>
    <variation>A</variation>
    <location>
        <position position="225"/>
    </location>
</feature>
<feature type="mutagenesis site" description="Increases affinity for eicosanoyl-CoA; when associated with A-447." evidence="1">
    <original>F</original>
    <variation>A</variation>
    <location>
        <position position="294"/>
    </location>
</feature>
<feature type="mutagenesis site" description="Increases affinity for eicosanoyl-CoA; when associated with A-447." evidence="1">
    <original>R</original>
    <variation>A</variation>
    <location>
        <position position="301"/>
    </location>
</feature>
<feature type="mutagenesis site" description="Loss of activity." evidence="1">
    <original>E</original>
    <variation>A</variation>
    <location>
        <position position="447"/>
    </location>
</feature>
<feature type="mutagenesis site" description="Decreases affinity for eicosanoyl-CoA; when associated with A-447." evidence="1">
    <original>R</original>
    <variation>A</variation>
    <location>
        <position position="460"/>
    </location>
</feature>
<feature type="helix" evidence="7">
    <location>
        <begin position="8"/>
        <end position="17"/>
    </location>
</feature>
<feature type="helix" evidence="7">
    <location>
        <begin position="21"/>
        <end position="23"/>
    </location>
</feature>
<feature type="turn" evidence="7">
    <location>
        <begin position="24"/>
        <end position="26"/>
    </location>
</feature>
<feature type="helix" evidence="7">
    <location>
        <begin position="28"/>
        <end position="30"/>
    </location>
</feature>
<feature type="helix" evidence="7">
    <location>
        <begin position="35"/>
        <end position="50"/>
    </location>
</feature>
<feature type="turn" evidence="7">
    <location>
        <begin position="51"/>
        <end position="53"/>
    </location>
</feature>
<feature type="helix" evidence="7">
    <location>
        <begin position="54"/>
        <end position="56"/>
    </location>
</feature>
<feature type="helix" evidence="7">
    <location>
        <begin position="57"/>
        <end position="62"/>
    </location>
</feature>
<feature type="strand" evidence="7">
    <location>
        <begin position="66"/>
        <end position="68"/>
    </location>
</feature>
<feature type="turn" evidence="7">
    <location>
        <begin position="69"/>
        <end position="72"/>
    </location>
</feature>
<feature type="strand" evidence="7">
    <location>
        <begin position="73"/>
        <end position="75"/>
    </location>
</feature>
<feature type="helix" evidence="7">
    <location>
        <begin position="78"/>
        <end position="89"/>
    </location>
</feature>
<feature type="helix" evidence="7">
    <location>
        <begin position="92"/>
        <end position="94"/>
    </location>
</feature>
<feature type="helix" evidence="7">
    <location>
        <begin position="99"/>
        <end position="101"/>
    </location>
</feature>
<feature type="helix" evidence="7">
    <location>
        <begin position="108"/>
        <end position="121"/>
    </location>
</feature>
<feature type="helix" evidence="7">
    <location>
        <begin position="123"/>
        <end position="128"/>
    </location>
</feature>
<feature type="helix" evidence="7">
    <location>
        <begin position="131"/>
        <end position="141"/>
    </location>
</feature>
<feature type="helix" evidence="7">
    <location>
        <begin position="144"/>
        <end position="155"/>
    </location>
</feature>
<feature type="strand" evidence="7">
    <location>
        <begin position="159"/>
        <end position="163"/>
    </location>
</feature>
<feature type="strand" evidence="7">
    <location>
        <begin position="169"/>
        <end position="171"/>
    </location>
</feature>
<feature type="helix" evidence="7">
    <location>
        <begin position="173"/>
        <end position="175"/>
    </location>
</feature>
<feature type="strand" evidence="7">
    <location>
        <begin position="179"/>
        <end position="182"/>
    </location>
</feature>
<feature type="strand" evidence="7">
    <location>
        <begin position="188"/>
        <end position="198"/>
    </location>
</feature>
<feature type="helix" evidence="7">
    <location>
        <begin position="203"/>
        <end position="205"/>
    </location>
</feature>
<feature type="strand" evidence="7">
    <location>
        <begin position="209"/>
        <end position="217"/>
    </location>
</feature>
<feature type="helix" evidence="7">
    <location>
        <begin position="224"/>
        <end position="226"/>
    </location>
</feature>
<feature type="strand" evidence="7">
    <location>
        <begin position="228"/>
        <end position="237"/>
    </location>
</feature>
<feature type="turn" evidence="7">
    <location>
        <begin position="239"/>
        <end position="241"/>
    </location>
</feature>
<feature type="strand" evidence="7">
    <location>
        <begin position="244"/>
        <end position="247"/>
    </location>
</feature>
<feature type="strand" evidence="7">
    <location>
        <begin position="249"/>
        <end position="255"/>
    </location>
</feature>
<feature type="strand" evidence="7">
    <location>
        <begin position="258"/>
        <end position="260"/>
    </location>
</feature>
<feature type="strand" evidence="7">
    <location>
        <begin position="266"/>
        <end position="272"/>
    </location>
</feature>
<feature type="strand" evidence="7">
    <location>
        <begin position="274"/>
        <end position="276"/>
    </location>
</feature>
<feature type="strand" evidence="7">
    <location>
        <begin position="278"/>
        <end position="282"/>
    </location>
</feature>
<feature type="helix" evidence="7">
    <location>
        <begin position="283"/>
        <end position="285"/>
    </location>
</feature>
<feature type="helix" evidence="7">
    <location>
        <begin position="289"/>
        <end position="325"/>
    </location>
</feature>
<feature type="strand" evidence="7">
    <location>
        <begin position="327"/>
        <end position="330"/>
    </location>
</feature>
<feature type="helix" evidence="7">
    <location>
        <begin position="332"/>
        <end position="334"/>
    </location>
</feature>
<feature type="strand" evidence="7">
    <location>
        <begin position="342"/>
        <end position="344"/>
    </location>
</feature>
<feature type="helix" evidence="7">
    <location>
        <begin position="345"/>
        <end position="347"/>
    </location>
</feature>
<feature type="helix" evidence="7">
    <location>
        <begin position="349"/>
        <end position="373"/>
    </location>
</feature>
<feature type="helix" evidence="7">
    <location>
        <begin position="378"/>
        <end position="385"/>
    </location>
</feature>
<feature type="helix" evidence="7">
    <location>
        <begin position="389"/>
        <end position="421"/>
    </location>
</feature>
<feature type="helix" evidence="7">
    <location>
        <begin position="422"/>
        <end position="427"/>
    </location>
</feature>
<feature type="helix" evidence="7">
    <location>
        <begin position="433"/>
        <end position="441"/>
    </location>
</feature>
<feature type="helix" evidence="7">
    <location>
        <begin position="442"/>
        <end position="444"/>
    </location>
</feature>
<feature type="turn" evidence="7">
    <location>
        <begin position="445"/>
        <end position="447"/>
    </location>
</feature>
<feature type="helix" evidence="7">
    <location>
        <begin position="450"/>
        <end position="459"/>
    </location>
</feature>
<feature type="turn" evidence="7">
    <location>
        <begin position="460"/>
        <end position="467"/>
    </location>
</feature>
<feature type="helix" evidence="7">
    <location>
        <begin position="468"/>
        <end position="481"/>
    </location>
</feature>
<feature type="helix" evidence="7">
    <location>
        <begin position="491"/>
        <end position="517"/>
    </location>
</feature>
<feature type="turn" evidence="7">
    <location>
        <begin position="518"/>
        <end position="520"/>
    </location>
</feature>
<feature type="helix" evidence="7">
    <location>
        <begin position="522"/>
        <end position="524"/>
    </location>
</feature>
<feature type="helix" evidence="7">
    <location>
        <begin position="525"/>
        <end position="560"/>
    </location>
</feature>
<feature type="helix" evidence="7">
    <location>
        <begin position="565"/>
        <end position="584"/>
    </location>
</feature>
<feature type="turn" evidence="7">
    <location>
        <begin position="585"/>
        <end position="587"/>
    </location>
</feature>
<feature type="helix" evidence="7">
    <location>
        <begin position="588"/>
        <end position="597"/>
    </location>
</feature>
<feature type="helix" evidence="7">
    <location>
        <begin position="602"/>
        <end position="605"/>
    </location>
</feature>
<feature type="helix" evidence="7">
    <location>
        <begin position="608"/>
        <end position="610"/>
    </location>
</feature>
<name>FADE5_MYCTU</name>
<evidence type="ECO:0000269" key="1">
    <source>
    </source>
</evidence>
<evidence type="ECO:0000303" key="2">
    <source>
    </source>
</evidence>
<evidence type="ECO:0000305" key="3"/>
<evidence type="ECO:0000305" key="4">
    <source>
    </source>
</evidence>
<evidence type="ECO:0000312" key="5">
    <source>
        <dbReference type="EMBL" id="CCP42973.1"/>
    </source>
</evidence>
<evidence type="ECO:0007744" key="6">
    <source>
        <dbReference type="PDB" id="6KSE"/>
    </source>
</evidence>
<evidence type="ECO:0007829" key="7">
    <source>
        <dbReference type="PDB" id="6KSE"/>
    </source>
</evidence>
<organism>
    <name type="scientific">Mycobacterium tuberculosis (strain ATCC 25618 / H37Rv)</name>
    <dbReference type="NCBI Taxonomy" id="83332"/>
    <lineage>
        <taxon>Bacteria</taxon>
        <taxon>Bacillati</taxon>
        <taxon>Actinomycetota</taxon>
        <taxon>Actinomycetes</taxon>
        <taxon>Mycobacteriales</taxon>
        <taxon>Mycobacteriaceae</taxon>
        <taxon>Mycobacterium</taxon>
        <taxon>Mycobacterium tuberculosis complex</taxon>
    </lineage>
</organism>
<protein>
    <recommendedName>
        <fullName evidence="3">Broad-specificity linear acyl-CoA dehydrogenase FadE5</fullName>
    </recommendedName>
    <alternativeName>
        <fullName evidence="3">Long-chain-acyl-CoA dehydrogenase</fullName>
        <ecNumber evidence="1">1.3.8.8</ecNumber>
    </alternativeName>
    <alternativeName>
        <fullName evidence="3">Medium-chain-acyl-CoA dehydrogenase</fullName>
        <ecNumber evidence="1">1.3.8.7</ecNumber>
    </alternativeName>
    <alternativeName>
        <fullName evidence="3">Short-chain-acyl-CoA dehydrogenase</fullName>
        <ecNumber evidence="1">1.3.8.1</ecNumber>
    </alternativeName>
</protein>
<proteinExistence type="evidence at protein level"/>
<reference key="1">
    <citation type="journal article" date="1998" name="Nature">
        <title>Deciphering the biology of Mycobacterium tuberculosis from the complete genome sequence.</title>
        <authorList>
            <person name="Cole S.T."/>
            <person name="Brosch R."/>
            <person name="Parkhill J."/>
            <person name="Garnier T."/>
            <person name="Churcher C.M."/>
            <person name="Harris D.E."/>
            <person name="Gordon S.V."/>
            <person name="Eiglmeier K."/>
            <person name="Gas S."/>
            <person name="Barry C.E. III"/>
            <person name="Tekaia F."/>
            <person name="Badcock K."/>
            <person name="Basham D."/>
            <person name="Brown D."/>
            <person name="Chillingworth T."/>
            <person name="Connor R."/>
            <person name="Davies R.M."/>
            <person name="Devlin K."/>
            <person name="Feltwell T."/>
            <person name="Gentles S."/>
            <person name="Hamlin N."/>
            <person name="Holroyd S."/>
            <person name="Hornsby T."/>
            <person name="Jagels K."/>
            <person name="Krogh A."/>
            <person name="McLean J."/>
            <person name="Moule S."/>
            <person name="Murphy L.D."/>
            <person name="Oliver S."/>
            <person name="Osborne J."/>
            <person name="Quail M.A."/>
            <person name="Rajandream M.A."/>
            <person name="Rogers J."/>
            <person name="Rutter S."/>
            <person name="Seeger K."/>
            <person name="Skelton S."/>
            <person name="Squares S."/>
            <person name="Squares R."/>
            <person name="Sulston J.E."/>
            <person name="Taylor K."/>
            <person name="Whitehead S."/>
            <person name="Barrell B.G."/>
        </authorList>
    </citation>
    <scope>NUCLEOTIDE SEQUENCE [LARGE SCALE GENOMIC DNA]</scope>
    <source>
        <strain>ATCC 25618 / H37Rv</strain>
    </source>
</reference>
<reference key="2">
    <citation type="journal article" date="2011" name="Mol. Cell. Proteomics">
        <title>Proteogenomic analysis of Mycobacterium tuberculosis by high resolution mass spectrometry.</title>
        <authorList>
            <person name="Kelkar D.S."/>
            <person name="Kumar D."/>
            <person name="Kumar P."/>
            <person name="Balakrishnan L."/>
            <person name="Muthusamy B."/>
            <person name="Yadav A.K."/>
            <person name="Shrivastava P."/>
            <person name="Marimuthu A."/>
            <person name="Anand S."/>
            <person name="Sundaram H."/>
            <person name="Kingsbury R."/>
            <person name="Harsha H.C."/>
            <person name="Nair B."/>
            <person name="Prasad T.S."/>
            <person name="Chauhan D.S."/>
            <person name="Katoch K."/>
            <person name="Katoch V.M."/>
            <person name="Kumar P."/>
            <person name="Chaerkady R."/>
            <person name="Ramachandran S."/>
            <person name="Dash D."/>
            <person name="Pandey A."/>
        </authorList>
    </citation>
    <scope>IDENTIFICATION BY MASS SPECTROMETRY [LARGE SCALE ANALYSIS]</scope>
    <source>
        <strain>ATCC 25618 / H37Rv</strain>
    </source>
</reference>
<reference evidence="6" key="3">
    <citation type="journal article" date="2020" name="Proc. Natl. Acad. Sci. U.S.A.">
        <title>Structural basis for the broad substrate specificity of two acyl-CoA dehydrogenases FadE5 from mycobacteria.</title>
        <authorList>
            <person name="Chen X."/>
            <person name="Chen J."/>
            <person name="Yan B."/>
            <person name="Zhang W."/>
            <person name="Guddat L.W."/>
            <person name="Liu X."/>
            <person name="Rao Z."/>
        </authorList>
    </citation>
    <scope>X-RAY CRYSTALLOGRAPHY (2.00 ANGSTROMS) OF MUTANT ALA-447 IN COMPLEX WITH FAD AND OCTADECANOYL-COA</scope>
    <scope>FUNCTION</scope>
    <scope>CATALYTIC ACTIVITY</scope>
    <scope>COFACTOR</scope>
    <scope>BIOPHYSICOCHEMICAL PROPERTIES</scope>
    <scope>PATHWAY</scope>
    <scope>SUBUNIT</scope>
    <scope>ACTIVE SITE</scope>
    <scope>MUTAGENESIS OF SER-171; LYS-225; PHE-294; ARG-301; GLU-447 AND ARG-460</scope>
    <source>
        <strain>H37Rv</strain>
    </source>
</reference>
<gene>
    <name evidence="2" type="primary">fadE5</name>
    <name evidence="5" type="ordered locus">Rv0244c</name>
</gene>
<dbReference type="EC" id="1.3.8.8" evidence="1"/>
<dbReference type="EC" id="1.3.8.7" evidence="1"/>
<dbReference type="EC" id="1.3.8.1" evidence="1"/>
<dbReference type="EMBL" id="AL123456">
    <property type="protein sequence ID" value="CCP42973.1"/>
    <property type="molecule type" value="Genomic_DNA"/>
</dbReference>
<dbReference type="RefSeq" id="NP_214758.1">
    <property type="nucleotide sequence ID" value="NC_000962.3"/>
</dbReference>
<dbReference type="RefSeq" id="WP_003401312.1">
    <property type="nucleotide sequence ID" value="NZ_NVQJ01000001.1"/>
</dbReference>
<dbReference type="PDB" id="6KSE">
    <property type="method" value="X-ray"/>
    <property type="resolution" value="2.00 A"/>
    <property type="chains" value="A/B=1-611"/>
</dbReference>
<dbReference type="PDBsum" id="6KSE"/>
<dbReference type="SMR" id="O53666"/>
<dbReference type="FunCoup" id="O53666">
    <property type="interactions" value="2"/>
</dbReference>
<dbReference type="STRING" id="83332.Rv0244c"/>
<dbReference type="PaxDb" id="83332-Rv0244c"/>
<dbReference type="DNASU" id="886698"/>
<dbReference type="GeneID" id="886698"/>
<dbReference type="KEGG" id="mtu:Rv0244c"/>
<dbReference type="KEGG" id="mtv:RVBD_0244c"/>
<dbReference type="PATRIC" id="fig|83332.111.peg.277"/>
<dbReference type="TubercuList" id="Rv0244c"/>
<dbReference type="eggNOG" id="COG1960">
    <property type="taxonomic scope" value="Bacteria"/>
</dbReference>
<dbReference type="InParanoid" id="O53666"/>
<dbReference type="OrthoDB" id="9807883at2"/>
<dbReference type="PhylomeDB" id="O53666"/>
<dbReference type="BioCyc" id="MetaCyc:G185E-4366-MONOMER"/>
<dbReference type="UniPathway" id="UPA00199"/>
<dbReference type="Proteomes" id="UP000001584">
    <property type="component" value="Chromosome"/>
</dbReference>
<dbReference type="GO" id="GO:0005576">
    <property type="term" value="C:extracellular region"/>
    <property type="evidence" value="ECO:0007005"/>
    <property type="project" value="MTBBASE"/>
</dbReference>
<dbReference type="GO" id="GO:0005886">
    <property type="term" value="C:plasma membrane"/>
    <property type="evidence" value="ECO:0007005"/>
    <property type="project" value="MTBBASE"/>
</dbReference>
<dbReference type="GO" id="GO:0004466">
    <property type="term" value="F:long-chain fatty acyl-CoA dehydrogenase activity"/>
    <property type="evidence" value="ECO:0007669"/>
    <property type="project" value="UniProtKB-EC"/>
</dbReference>
<dbReference type="GO" id="GO:0070991">
    <property type="term" value="F:medium-chain fatty acyl-CoA dehydrogenase activity"/>
    <property type="evidence" value="ECO:0007669"/>
    <property type="project" value="UniProtKB-EC"/>
</dbReference>
<dbReference type="GO" id="GO:0016937">
    <property type="term" value="F:short-chain fatty acyl-CoA dehydrogenase activity"/>
    <property type="evidence" value="ECO:0007669"/>
    <property type="project" value="UniProtKB-EC"/>
</dbReference>
<dbReference type="GO" id="GO:0006631">
    <property type="term" value="P:fatty acid metabolic process"/>
    <property type="evidence" value="ECO:0007669"/>
    <property type="project" value="UniProtKB-UniPathway"/>
</dbReference>
<dbReference type="CDD" id="cd01153">
    <property type="entry name" value="ACAD_fadE5"/>
    <property type="match status" value="1"/>
</dbReference>
<dbReference type="FunFam" id="2.40.110.20:FF:000001">
    <property type="entry name" value="Acyl-CoA dehydrogenase AidB"/>
    <property type="match status" value="1"/>
</dbReference>
<dbReference type="FunFam" id="1.20.140.10:FF:000016">
    <property type="entry name" value="Acyl-CoA dehydrogenase FadE5"/>
    <property type="match status" value="1"/>
</dbReference>
<dbReference type="Gene3D" id="2.40.110.20">
    <property type="match status" value="1"/>
</dbReference>
<dbReference type="Gene3D" id="1.20.140.10">
    <property type="entry name" value="Butyryl-CoA Dehydrogenase, subunit A, domain 3"/>
    <property type="match status" value="1"/>
</dbReference>
<dbReference type="InterPro" id="IPR025878">
    <property type="entry name" value="Acyl-CoA_dh-like_C_dom"/>
</dbReference>
<dbReference type="InterPro" id="IPR020953">
    <property type="entry name" value="Acyl-CoA_DH_N_bac"/>
</dbReference>
<dbReference type="InterPro" id="IPR006091">
    <property type="entry name" value="Acyl-CoA_Oxase/DH_mid-dom"/>
</dbReference>
<dbReference type="InterPro" id="IPR036250">
    <property type="entry name" value="AcylCo_DH-like_C"/>
</dbReference>
<dbReference type="InterPro" id="IPR009075">
    <property type="entry name" value="AcylCo_DH/oxidase_C"/>
</dbReference>
<dbReference type="InterPro" id="IPR009100">
    <property type="entry name" value="AcylCoA_DH/oxidase_NM_dom_sf"/>
</dbReference>
<dbReference type="InterPro" id="IPR052166">
    <property type="entry name" value="Diverse_Acyl-CoA_DH"/>
</dbReference>
<dbReference type="InterPro" id="IPR034188">
    <property type="entry name" value="FadE5-like"/>
</dbReference>
<dbReference type="PANTHER" id="PTHR42803">
    <property type="entry name" value="ACYL-COA DEHYDROGENASE"/>
    <property type="match status" value="1"/>
</dbReference>
<dbReference type="PANTHER" id="PTHR42803:SF1">
    <property type="entry name" value="BROAD-SPECIFICITY LINEAR ACYL-COA DEHYDROGENASE FADE5"/>
    <property type="match status" value="1"/>
</dbReference>
<dbReference type="Pfam" id="PF00441">
    <property type="entry name" value="Acyl-CoA_dh_1"/>
    <property type="match status" value="1"/>
</dbReference>
<dbReference type="Pfam" id="PF12806">
    <property type="entry name" value="Acyl-CoA_dh_C"/>
    <property type="match status" value="1"/>
</dbReference>
<dbReference type="Pfam" id="PF02770">
    <property type="entry name" value="Acyl-CoA_dh_M"/>
    <property type="match status" value="1"/>
</dbReference>
<dbReference type="Pfam" id="PF12418">
    <property type="entry name" value="AcylCoA_DH_N"/>
    <property type="match status" value="1"/>
</dbReference>
<dbReference type="SUPFAM" id="SSF47203">
    <property type="entry name" value="Acyl-CoA dehydrogenase C-terminal domain-like"/>
    <property type="match status" value="1"/>
</dbReference>
<dbReference type="SUPFAM" id="SSF56645">
    <property type="entry name" value="Acyl-CoA dehydrogenase NM domain-like"/>
    <property type="match status" value="1"/>
</dbReference>